<proteinExistence type="inferred from homology"/>
<sequence>MTQCASRRKSTPNRAILGAFASARGTRWVATIAGLIGFVLSVATPLLPVVQTTAMLDWPQRGQLGSVTAPLISLTPVDFTATVPCDVVRAMPPAGGVVLGTAPKQGKDANLQALFVVVSAQRVDVTDRNVVILSVPREQVTSPQCQRIEVTSTHAGTFANFVGLKDPSGAPLRSGFPDPNLRPQIVGVFTDLTGPAPPGLAVSATIDTRFSTRPTTLKLLAIIGAIVATVVALIALWRLDQLDGRGSIAQLLLRPFRPASSPGGMRRLIPASWRTFTLTDAVVIFGFLLWHVIGANSSDDGYILGMARVADHAGYMSNYFRWFGSPEDPFGWYYNLLALMTHVSDASLWMRLPDLAAGLVCWLLLSREVLPRLGPAVEASKPAYWAAAMVLLTAWMPFNNGLRPEGIIALGSLVTYVLIERSMRYSRLTPAALAVVTAAFTLGVQPTGLIAVAALVAGGRPMLRILVRRHRLVGTLPLVSPMLAAGTVILTVVFADQTLSTVLEATRVRAKIGPSQAWYTENLRYYYLILPTVDGSLSRRFGFLITALCLFTAVFIMLRRKRIPSVARGPAWRLMGVIFGTMFFLMFTPTKWVHHFGLFAAVGAAMAALTTVLVSPSVLRWSRNRMAFLAALFFLLALCWATTNGWWYVSSYGVPFNSAMPKIDGITVSTIFFALFAIAAGYAAWLHFAPRGAGEGRLIRALTTAPVPIVAGFMAAVFVASMVAGIVRQYPTYSNGWSNVRAFVGGCGLADDVLVEPDTNAGFMKPLDGDSGSWGPLGPLGGVNPVGFTPNGVPEHTVAEAIVMKPNQPGTDYDWDAPTKLTSPGINGSTVPLPYGLDPARVPLAGTYTTGAQQQSTLVSAWYLLPKPDDGHPLVVVTAAGKIAGNSVLHGYTPGQTVVLEYAMPGPGALVPAGRMVPDDLYGEQPKAWRNLRFARAKMPADAVAVRVVAEDLSLTPEDWIAVTPPRVPDLRSLQEYVGSTQPVLLDWAVGLAFPCQQPMLHANGIAEIPKFRITPDYSAKKLDTDTWEDGTNGGLLGITDLLLRAHVMATYLSRDWARDWGSLRKFDTLVDAPPAQLELGTATRSGLWSPGKIRIGP</sequence>
<name>EMBB_MYCTO</name>
<reference key="1">
    <citation type="journal article" date="2002" name="J. Bacteriol.">
        <title>Whole-genome comparison of Mycobacterium tuberculosis clinical and laboratory strains.</title>
        <authorList>
            <person name="Fleischmann R.D."/>
            <person name="Alland D."/>
            <person name="Eisen J.A."/>
            <person name="Carpenter L."/>
            <person name="White O."/>
            <person name="Peterson J.D."/>
            <person name="DeBoy R.T."/>
            <person name="Dodson R.J."/>
            <person name="Gwinn M.L."/>
            <person name="Haft D.H."/>
            <person name="Hickey E.K."/>
            <person name="Kolonay J.F."/>
            <person name="Nelson W.C."/>
            <person name="Umayam L.A."/>
            <person name="Ermolaeva M.D."/>
            <person name="Salzberg S.L."/>
            <person name="Delcher A."/>
            <person name="Utterback T.R."/>
            <person name="Weidman J.F."/>
            <person name="Khouri H.M."/>
            <person name="Gill J."/>
            <person name="Mikula A."/>
            <person name="Bishai W."/>
            <person name="Jacobs W.R. Jr."/>
            <person name="Venter J.C."/>
            <person name="Fraser C.M."/>
        </authorList>
    </citation>
    <scope>NUCLEOTIDE SEQUENCE [LARGE SCALE GENOMIC DNA]</scope>
    <source>
        <strain>CDC 1551 / Oshkosh</strain>
    </source>
</reference>
<dbReference type="EC" id="2.4.2.-"/>
<dbReference type="EMBL" id="AE000516">
    <property type="protein sequence ID" value="AAK48268.1"/>
    <property type="molecule type" value="Genomic_DNA"/>
</dbReference>
<dbReference type="PIR" id="G70697">
    <property type="entry name" value="G70697"/>
</dbReference>
<dbReference type="RefSeq" id="WP_003901728.1">
    <property type="nucleotide sequence ID" value="NZ_KK341227.1"/>
</dbReference>
<dbReference type="SMR" id="P9WNL6"/>
<dbReference type="DrugCentral" id="P9WNL6"/>
<dbReference type="CAZy" id="GT53">
    <property type="family name" value="Glycosyltransferase Family 53"/>
</dbReference>
<dbReference type="KEGG" id="mtc:MT3902"/>
<dbReference type="PATRIC" id="fig|83331.31.peg.4199"/>
<dbReference type="HOGENOM" id="CLU_010182_0_0_11"/>
<dbReference type="Proteomes" id="UP000001020">
    <property type="component" value="Chromosome"/>
</dbReference>
<dbReference type="GO" id="GO:0005886">
    <property type="term" value="C:plasma membrane"/>
    <property type="evidence" value="ECO:0007669"/>
    <property type="project" value="UniProtKB-SubCell"/>
</dbReference>
<dbReference type="GO" id="GO:0052636">
    <property type="term" value="F:arabinosyltransferase activity"/>
    <property type="evidence" value="ECO:0007669"/>
    <property type="project" value="InterPro"/>
</dbReference>
<dbReference type="GO" id="GO:0071766">
    <property type="term" value="P:Actinobacterium-type cell wall biogenesis"/>
    <property type="evidence" value="ECO:0007669"/>
    <property type="project" value="InterPro"/>
</dbReference>
<dbReference type="GO" id="GO:0071555">
    <property type="term" value="P:cell wall organization"/>
    <property type="evidence" value="ECO:0007669"/>
    <property type="project" value="UniProtKB-KW"/>
</dbReference>
<dbReference type="GO" id="GO:0046677">
    <property type="term" value="P:response to antibiotic"/>
    <property type="evidence" value="ECO:0007669"/>
    <property type="project" value="UniProtKB-KW"/>
</dbReference>
<dbReference type="FunFam" id="2.60.120.940:FF:000001">
    <property type="entry name" value="Membrane indolylacetylinositol arabinosyltransferase embC"/>
    <property type="match status" value="1"/>
</dbReference>
<dbReference type="FunFam" id="2.60.120.610:FF:000002">
    <property type="entry name" value="Probable arabinosyltransferase B"/>
    <property type="match status" value="1"/>
</dbReference>
<dbReference type="Gene3D" id="3.40.190.160">
    <property type="match status" value="1"/>
</dbReference>
<dbReference type="Gene3D" id="2.60.120.610">
    <property type="entry name" value="arabinofuranosyltransferase like domain"/>
    <property type="match status" value="1"/>
</dbReference>
<dbReference type="Gene3D" id="2.60.120.940">
    <property type="entry name" value="EmbC, C-terminal domain, subdomain 2"/>
    <property type="match status" value="1"/>
</dbReference>
<dbReference type="InterPro" id="IPR032731">
    <property type="entry name" value="Arabino_trans_C"/>
</dbReference>
<dbReference type="InterPro" id="IPR042486">
    <property type="entry name" value="Arabino_trans_C_2"/>
</dbReference>
<dbReference type="InterPro" id="IPR007680">
    <property type="entry name" value="Arabino_trans_central"/>
</dbReference>
<dbReference type="InterPro" id="IPR040920">
    <property type="entry name" value="Arabino_trans_N"/>
</dbReference>
<dbReference type="InterPro" id="IPR027451">
    <property type="entry name" value="EmbABC_dom1"/>
</dbReference>
<dbReference type="Pfam" id="PF14896">
    <property type="entry name" value="Arabino_trans_C"/>
    <property type="match status" value="1"/>
</dbReference>
<dbReference type="Pfam" id="PF17689">
    <property type="entry name" value="Arabino_trans_N"/>
    <property type="match status" value="1"/>
</dbReference>
<dbReference type="Pfam" id="PF04602">
    <property type="entry name" value="Arabinose_trans"/>
    <property type="match status" value="1"/>
</dbReference>
<accession>P9WNL6</accession>
<accession>L0TDT8</accession>
<accession>P72030</accession>
<accession>P72061</accession>
<protein>
    <recommendedName>
        <fullName>Probable arabinosyltransferase B</fullName>
        <ecNumber>2.4.2.-</ecNumber>
    </recommendedName>
</protein>
<comment type="function">
    <text evidence="1">Arabinosyl transferase responsible for the polymerization of arabinose into the arabinan of arabinogalactan.</text>
</comment>
<comment type="subcellular location">
    <subcellularLocation>
        <location evidence="1">Cell membrane</location>
        <topology evidence="1">Multi-pass membrane protein</topology>
    </subcellularLocation>
</comment>
<comment type="similarity">
    <text evidence="3">Belongs to the emb family.</text>
</comment>
<feature type="chain" id="PRO_0000427105" description="Probable arabinosyltransferase B">
    <location>
        <begin position="1"/>
        <end position="1098"/>
    </location>
</feature>
<feature type="transmembrane region" description="Helical" evidence="2">
    <location>
        <begin position="28"/>
        <end position="50"/>
    </location>
</feature>
<feature type="transmembrane region" description="Helical" evidence="2">
    <location>
        <begin position="217"/>
        <end position="239"/>
    </location>
</feature>
<feature type="transmembrane region" description="Helical" evidence="2">
    <location>
        <begin position="271"/>
        <end position="293"/>
    </location>
</feature>
<feature type="transmembrane region" description="Helical" evidence="2">
    <location>
        <begin position="402"/>
        <end position="419"/>
    </location>
</feature>
<feature type="transmembrane region" description="Helical" evidence="2">
    <location>
        <begin position="434"/>
        <end position="456"/>
    </location>
</feature>
<feature type="transmembrane region" description="Helical" evidence="2">
    <location>
        <begin position="472"/>
        <end position="494"/>
    </location>
</feature>
<feature type="transmembrane region" description="Helical" evidence="2">
    <location>
        <begin position="541"/>
        <end position="558"/>
    </location>
</feature>
<feature type="transmembrane region" description="Helical" evidence="2">
    <location>
        <begin position="570"/>
        <end position="587"/>
    </location>
</feature>
<feature type="transmembrane region" description="Helical" evidence="2">
    <location>
        <begin position="597"/>
        <end position="619"/>
    </location>
</feature>
<feature type="transmembrane region" description="Helical" evidence="2">
    <location>
        <begin position="626"/>
        <end position="648"/>
    </location>
</feature>
<feature type="transmembrane region" description="Helical" evidence="2">
    <location>
        <begin position="663"/>
        <end position="685"/>
    </location>
</feature>
<feature type="transmembrane region" description="Helical" evidence="2">
    <location>
        <begin position="698"/>
        <end position="720"/>
    </location>
</feature>
<gene>
    <name type="primary">embB</name>
    <name type="ordered locus">MT3902</name>
</gene>
<keyword id="KW-0046">Antibiotic resistance</keyword>
<keyword id="KW-1003">Cell membrane</keyword>
<keyword id="KW-0961">Cell wall biogenesis/degradation</keyword>
<keyword id="KW-0328">Glycosyltransferase</keyword>
<keyword id="KW-0472">Membrane</keyword>
<keyword id="KW-1185">Reference proteome</keyword>
<keyword id="KW-0808">Transferase</keyword>
<keyword id="KW-0812">Transmembrane</keyword>
<keyword id="KW-1133">Transmembrane helix</keyword>
<organism>
    <name type="scientific">Mycobacterium tuberculosis (strain CDC 1551 / Oshkosh)</name>
    <dbReference type="NCBI Taxonomy" id="83331"/>
    <lineage>
        <taxon>Bacteria</taxon>
        <taxon>Bacillati</taxon>
        <taxon>Actinomycetota</taxon>
        <taxon>Actinomycetes</taxon>
        <taxon>Mycobacteriales</taxon>
        <taxon>Mycobacteriaceae</taxon>
        <taxon>Mycobacterium</taxon>
        <taxon>Mycobacterium tuberculosis complex</taxon>
    </lineage>
</organism>
<evidence type="ECO:0000250" key="1"/>
<evidence type="ECO:0000255" key="2"/>
<evidence type="ECO:0000305" key="3"/>